<gene>
    <name evidence="6" type="primary">Atox1</name>
    <name type="synonym">Rah1</name>
</gene>
<accession>Q9WUC4</accession>
<accession>Q549B3</accession>
<sequence length="68" mass="7292">MPKHEFSVDMTCGGCAEAVSRVLNKLGGVEFNIDLPNKKVCIESEHSSDILLATLNKTGKAVSYLGPK</sequence>
<evidence type="ECO:0000250" key="1"/>
<evidence type="ECO:0000250" key="2">
    <source>
        <dbReference type="UniProtKB" id="O00244"/>
    </source>
</evidence>
<evidence type="ECO:0000250" key="3">
    <source>
        <dbReference type="UniProtKB" id="O08997"/>
    </source>
</evidence>
<evidence type="ECO:0000255" key="4">
    <source>
        <dbReference type="PROSITE-ProRule" id="PRU00280"/>
    </source>
</evidence>
<evidence type="ECO:0000305" key="5"/>
<evidence type="ECO:0000312" key="6">
    <source>
        <dbReference type="RGD" id="621684"/>
    </source>
</evidence>
<protein>
    <recommendedName>
        <fullName evidence="5">Copper transport protein ATOX1</fullName>
    </recommendedName>
    <alternativeName>
        <fullName>ATX1 homolog protein Rah1</fullName>
    </alternativeName>
    <alternativeName>
        <fullName>Metal transport protein ATX1</fullName>
    </alternativeName>
</protein>
<keyword id="KW-0007">Acetylation</keyword>
<keyword id="KW-0143">Chaperone</keyword>
<keyword id="KW-0186">Copper</keyword>
<keyword id="KW-0187">Copper transport</keyword>
<keyword id="KW-0903">Direct protein sequencing</keyword>
<keyword id="KW-0406">Ion transport</keyword>
<keyword id="KW-0479">Metal-binding</keyword>
<keyword id="KW-0597">Phosphoprotein</keyword>
<keyword id="KW-1185">Reference proteome</keyword>
<keyword id="KW-0813">Transport</keyword>
<feature type="chain" id="PRO_0000212539" description="Copper transport protein ATOX1">
    <location>
        <begin position="1"/>
        <end position="68"/>
    </location>
</feature>
<feature type="domain" description="HMA" evidence="4">
    <location>
        <begin position="1"/>
        <end position="63"/>
    </location>
</feature>
<feature type="binding site" evidence="2 4">
    <location>
        <position position="12"/>
    </location>
    <ligand>
        <name>Cu cation</name>
        <dbReference type="ChEBI" id="CHEBI:23378"/>
    </ligand>
</feature>
<feature type="binding site" evidence="2 4">
    <location>
        <position position="15"/>
    </location>
    <ligand>
        <name>Cu cation</name>
        <dbReference type="ChEBI" id="CHEBI:23378"/>
    </ligand>
</feature>
<feature type="modified residue" description="Phosphoserine" evidence="2">
    <location>
        <position position="47"/>
    </location>
</feature>
<feature type="modified residue" description="N6-acetyllysine" evidence="3">
    <location>
        <position position="60"/>
    </location>
</feature>
<proteinExistence type="evidence at protein level"/>
<reference key="1">
    <citation type="journal article" date="1999" name="Biochem. Biophys. Res. Commun.">
        <title>Molecular cloning of rat ATX1 homologue protein.</title>
        <authorList>
            <person name="Hiromura M."/>
            <person name="Sakurai H."/>
        </authorList>
    </citation>
    <scope>NUCLEOTIDE SEQUENCE [MRNA]</scope>
    <scope>TISSUE SPECIFICITY</scope>
</reference>
<reference key="2">
    <citation type="journal article" date="1999" name="Neuroscience">
        <title>Expression profile of the copper homeostasis gene, rAtox1, in the rat brain.</title>
        <authorList>
            <person name="Naeve G.S."/>
            <person name="Vana A.M."/>
            <person name="Eggold J.R."/>
            <person name="Kelner G.S."/>
            <person name="Maki R."/>
            <person name="Desouza E.B."/>
            <person name="Foster A.C."/>
        </authorList>
    </citation>
    <scope>NUCLEOTIDE SEQUENCE [MRNA]</scope>
</reference>
<reference key="3">
    <citation type="journal article" date="2004" name="Genome Res.">
        <title>The status, quality, and expansion of the NIH full-length cDNA project: the Mammalian Gene Collection (MGC).</title>
        <authorList>
            <consortium name="The MGC Project Team"/>
        </authorList>
    </citation>
    <scope>NUCLEOTIDE SEQUENCE [LARGE SCALE MRNA]</scope>
    <source>
        <tissue>Pituitary</tissue>
    </source>
</reference>
<reference key="4">
    <citation type="submission" date="2006-11" db="UniProtKB">
        <authorList>
            <person name="Lubec G."/>
            <person name="Afjehi-Sadat L."/>
        </authorList>
    </citation>
    <scope>PROTEIN SEQUENCE OF 26-57</scope>
    <scope>IDENTIFICATION BY MASS SPECTROMETRY</scope>
    <source>
        <strain>Sprague-Dawley</strain>
        <tissue>Spinal cord</tissue>
    </source>
</reference>
<organism>
    <name type="scientific">Rattus norvegicus</name>
    <name type="common">Rat</name>
    <dbReference type="NCBI Taxonomy" id="10116"/>
    <lineage>
        <taxon>Eukaryota</taxon>
        <taxon>Metazoa</taxon>
        <taxon>Chordata</taxon>
        <taxon>Craniata</taxon>
        <taxon>Vertebrata</taxon>
        <taxon>Euteleostomi</taxon>
        <taxon>Mammalia</taxon>
        <taxon>Eutheria</taxon>
        <taxon>Euarchontoglires</taxon>
        <taxon>Glires</taxon>
        <taxon>Rodentia</taxon>
        <taxon>Myomorpha</taxon>
        <taxon>Muroidea</taxon>
        <taxon>Muridae</taxon>
        <taxon>Murinae</taxon>
        <taxon>Rattus</taxon>
    </lineage>
</organism>
<dbReference type="EMBL" id="AF177671">
    <property type="protein sequence ID" value="AAD53914.1"/>
    <property type="molecule type" value="mRNA"/>
</dbReference>
<dbReference type="EMBL" id="AF127137">
    <property type="protein sequence ID" value="AAD27844.1"/>
    <property type="molecule type" value="mRNA"/>
</dbReference>
<dbReference type="EMBL" id="BC058458">
    <property type="protein sequence ID" value="AAH58458.1"/>
    <property type="molecule type" value="mRNA"/>
</dbReference>
<dbReference type="PIR" id="JC7133">
    <property type="entry name" value="JC7133"/>
</dbReference>
<dbReference type="RefSeq" id="NP_445811.1">
    <property type="nucleotide sequence ID" value="NM_053359.2"/>
</dbReference>
<dbReference type="RefSeq" id="XP_063126056.1">
    <property type="nucleotide sequence ID" value="XM_063269986.1"/>
</dbReference>
<dbReference type="SMR" id="Q9WUC4"/>
<dbReference type="FunCoup" id="Q9WUC4">
    <property type="interactions" value="1895"/>
</dbReference>
<dbReference type="STRING" id="10116.ENSRNOP00000017588"/>
<dbReference type="iPTMnet" id="Q9WUC4"/>
<dbReference type="PhosphoSitePlus" id="Q9WUC4"/>
<dbReference type="SwissPalm" id="Q9WUC4"/>
<dbReference type="jPOST" id="Q9WUC4"/>
<dbReference type="PaxDb" id="10116-ENSRNOP00000017588"/>
<dbReference type="GeneID" id="84355"/>
<dbReference type="KEGG" id="rno:84355"/>
<dbReference type="UCSC" id="RGD:621684">
    <property type="organism name" value="rat"/>
</dbReference>
<dbReference type="AGR" id="RGD:621684"/>
<dbReference type="CTD" id="475"/>
<dbReference type="RGD" id="621684">
    <property type="gene designation" value="Atox1"/>
</dbReference>
<dbReference type="VEuPathDB" id="HostDB:ENSRNOG00000013118"/>
<dbReference type="eggNOG" id="KOG1603">
    <property type="taxonomic scope" value="Eukaryota"/>
</dbReference>
<dbReference type="HOGENOM" id="CLU_134973_3_1_1"/>
<dbReference type="InParanoid" id="Q9WUC4"/>
<dbReference type="OrthoDB" id="1919at9989"/>
<dbReference type="PhylomeDB" id="Q9WUC4"/>
<dbReference type="TreeFam" id="TF352589"/>
<dbReference type="Reactome" id="R-RNO-6803544">
    <property type="pathway name" value="Ion influx/efflux at host-pathogen interface"/>
</dbReference>
<dbReference type="PRO" id="PR:Q9WUC4"/>
<dbReference type="Proteomes" id="UP000002494">
    <property type="component" value="Chromosome 10"/>
</dbReference>
<dbReference type="Bgee" id="ENSRNOG00000013118">
    <property type="expression patterns" value="Expressed in duodenum and 20 other cell types or tissues"/>
</dbReference>
<dbReference type="GO" id="GO:0005829">
    <property type="term" value="C:cytosol"/>
    <property type="evidence" value="ECO:0000318"/>
    <property type="project" value="GO_Central"/>
</dbReference>
<dbReference type="GO" id="GO:0051117">
    <property type="term" value="F:ATPase binding"/>
    <property type="evidence" value="ECO:0000353"/>
    <property type="project" value="RGD"/>
</dbReference>
<dbReference type="GO" id="GO:0016531">
    <property type="term" value="F:copper chaperone activity"/>
    <property type="evidence" value="ECO:0000266"/>
    <property type="project" value="RGD"/>
</dbReference>
<dbReference type="GO" id="GO:0005507">
    <property type="term" value="F:copper ion binding"/>
    <property type="evidence" value="ECO:0000266"/>
    <property type="project" value="RGD"/>
</dbReference>
<dbReference type="GO" id="GO:0032767">
    <property type="term" value="F:copper-dependent protein binding"/>
    <property type="evidence" value="ECO:0000266"/>
    <property type="project" value="RGD"/>
</dbReference>
<dbReference type="GO" id="GO:1903136">
    <property type="term" value="F:cuprous ion binding"/>
    <property type="evidence" value="ECO:0000266"/>
    <property type="project" value="RGD"/>
</dbReference>
<dbReference type="GO" id="GO:0060003">
    <property type="term" value="P:copper ion export"/>
    <property type="evidence" value="ECO:0000315"/>
    <property type="project" value="RGD"/>
</dbReference>
<dbReference type="GO" id="GO:0006825">
    <property type="term" value="P:copper ion transport"/>
    <property type="evidence" value="ECO:0000266"/>
    <property type="project" value="RGD"/>
</dbReference>
<dbReference type="GO" id="GO:0006878">
    <property type="term" value="P:intracellular copper ion homeostasis"/>
    <property type="evidence" value="ECO:0000266"/>
    <property type="project" value="RGD"/>
</dbReference>
<dbReference type="GO" id="GO:0043066">
    <property type="term" value="P:negative regulation of apoptotic process"/>
    <property type="evidence" value="ECO:0000314"/>
    <property type="project" value="RGD"/>
</dbReference>
<dbReference type="GO" id="GO:0006979">
    <property type="term" value="P:response to oxidative stress"/>
    <property type="evidence" value="ECO:0000314"/>
    <property type="project" value="RGD"/>
</dbReference>
<dbReference type="CDD" id="cd00371">
    <property type="entry name" value="HMA"/>
    <property type="match status" value="1"/>
</dbReference>
<dbReference type="FunFam" id="3.30.70.100:FF:000008">
    <property type="entry name" value="Copper transport protein ATOX1"/>
    <property type="match status" value="1"/>
</dbReference>
<dbReference type="Gene3D" id="3.30.70.100">
    <property type="match status" value="1"/>
</dbReference>
<dbReference type="InterPro" id="IPR051881">
    <property type="entry name" value="Copper_transport_ATOX1-like"/>
</dbReference>
<dbReference type="InterPro" id="IPR017969">
    <property type="entry name" value="Heavy-metal-associated_CS"/>
</dbReference>
<dbReference type="InterPro" id="IPR006121">
    <property type="entry name" value="HMA_dom"/>
</dbReference>
<dbReference type="InterPro" id="IPR036163">
    <property type="entry name" value="HMA_dom_sf"/>
</dbReference>
<dbReference type="PANTHER" id="PTHR46365">
    <property type="entry name" value="COPPER TRANSPORT PROTEIN ATOX1"/>
    <property type="match status" value="1"/>
</dbReference>
<dbReference type="PANTHER" id="PTHR46365:SF1">
    <property type="entry name" value="COPPER TRANSPORT PROTEIN ATOX1"/>
    <property type="match status" value="1"/>
</dbReference>
<dbReference type="Pfam" id="PF00403">
    <property type="entry name" value="HMA"/>
    <property type="match status" value="1"/>
</dbReference>
<dbReference type="SUPFAM" id="SSF55008">
    <property type="entry name" value="HMA, heavy metal-associated domain"/>
    <property type="match status" value="1"/>
</dbReference>
<dbReference type="PROSITE" id="PS01047">
    <property type="entry name" value="HMA_1"/>
    <property type="match status" value="1"/>
</dbReference>
<dbReference type="PROSITE" id="PS50846">
    <property type="entry name" value="HMA_2"/>
    <property type="match status" value="1"/>
</dbReference>
<comment type="function">
    <text evidence="1">Binds and deliver cytosolic copper to the copper ATPase proteins. May be important in cellular antioxidant defense (By similarity).</text>
</comment>
<comment type="subunit">
    <text evidence="2">Homodimer. Interacts with ATP7B. Interacts with ATP7A. Interacts (via dimer form) with SLC31A1 (via C-terminal domain); this interaction improves ATOX1 stability and controls intracellular Cu(I) levels.</text>
</comment>
<comment type="domain">
    <text evidence="2">The heavy-metal-associated domain (HMA) coordinates a Cu(+) ion via the cysteine residues within the CXXC motif. The transfer of Cu(+) ion from ATOX1 to ATP7A involves the formation of a three-coordinate Cu(+)-bridged heterodimer where the metal is shared between the two metal binding sites of ATOX1 and ATP7A. The Cu(+) ion appears to switch between two coordination modes, forming two links with one protein and one with the other. Cisplatin, a chemotherapeutic drug, can bind the CXXC motif and hinder the release of Cu(+) ion.</text>
</comment>
<comment type="similarity">
    <text evidence="5">Belongs to the ATX1 family.</text>
</comment>
<name>ATOX1_RAT</name>